<comment type="subunit">
    <text evidence="3">Microtubule inner protein component of sperm flagellar doublet microtubules.</text>
</comment>
<comment type="subcellular location">
    <subcellularLocation>
        <location evidence="2">Cytoplasm</location>
        <location evidence="2">Cytoskeleton</location>
        <location evidence="2">Cilium axoneme</location>
    </subcellularLocation>
    <subcellularLocation>
        <location evidence="3">Cytoplasm</location>
        <location evidence="3">Cytoskeleton</location>
        <location evidence="3">Flagellum axoneme</location>
    </subcellularLocation>
</comment>
<comment type="alternative products">
    <event type="alternative splicing"/>
    <isoform>
        <id>Q5NC57-1</id>
        <name>1</name>
        <sequence type="displayed"/>
    </isoform>
    <isoform>
        <id>Q5NC57-2</id>
        <name>2</name>
        <sequence type="described" ref="VSP_034207"/>
    </isoform>
</comment>
<comment type="tissue specificity">
    <text evidence="2">Predominantly expressed in tissues containing motile cilia.</text>
</comment>
<comment type="developmental stage">
    <text evidence="2">Expressed in the developing fetal lung epithelium and embryonic ventral node (at protein level).</text>
</comment>
<comment type="induction">
    <text evidence="2">Expression is activated by FOXJ1 and NOTO.</text>
</comment>
<comment type="similarity">
    <text evidence="6">Belongs to the CFAP144 family.</text>
</comment>
<comment type="sequence caution" evidence="6">
    <conflict type="erroneous initiation">
        <sequence resource="EMBL-CDS" id="ACS94741"/>
    </conflict>
    <text>Extended N-terminus.</text>
</comment>
<comment type="sequence caution" evidence="6">
    <conflict type="erroneous initiation">
        <sequence resource="EMBL-CDS" id="BAB29057"/>
    </conflict>
    <text>Extended N-terminus.</text>
</comment>
<comment type="sequence caution" evidence="6">
    <conflict type="erroneous initiation">
        <sequence resource="EMBL-CDS" id="BAE34292"/>
    </conflict>
    <text>Extended N-terminus.</text>
</comment>
<comment type="sequence caution" evidence="6">
    <conflict type="erroneous initiation">
        <sequence resource="EMBL-CDS" id="CAI25624"/>
    </conflict>
    <text>Extended N-terminus.</text>
</comment>
<comment type="sequence caution" evidence="6">
    <conflict type="erroneous initiation">
        <sequence resource="EMBL-CDS" id="CAI25625"/>
    </conflict>
    <text>Extended N-terminus.</text>
</comment>
<gene>
    <name evidence="7" type="primary">Cfap144</name>
    <name evidence="5" type="synonym">Theg6</name>
</gene>
<feature type="chain" id="PRO_0000340272" description="Cilia- and flagella-associated protein 144">
    <location>
        <begin position="1"/>
        <end position="135"/>
    </location>
</feature>
<feature type="region of interest" description="Disordered" evidence="1">
    <location>
        <begin position="76"/>
        <end position="100"/>
    </location>
</feature>
<feature type="splice variant" id="VSP_034207" description="In isoform 2." evidence="4">
    <location>
        <begin position="45"/>
        <end position="64"/>
    </location>
</feature>
<feature type="sequence conflict" description="In Ref. 2; BAE34292." evidence="6" ref="2">
    <original>K</original>
    <variation>E</variation>
    <location>
        <position position="32"/>
    </location>
</feature>
<keyword id="KW-0002">3D-structure</keyword>
<keyword id="KW-0025">Alternative splicing</keyword>
<keyword id="KW-0966">Cell projection</keyword>
<keyword id="KW-0969">Cilium</keyword>
<keyword id="KW-0963">Cytoplasm</keyword>
<keyword id="KW-0206">Cytoskeleton</keyword>
<keyword id="KW-0282">Flagellum</keyword>
<keyword id="KW-1185">Reference proteome</keyword>
<sequence length="135" mass="16125">MAGRVGQMKNQDEVHQNQILRELFLKELRAQKLYTQYHVNPLRKVHTITRKPMSWHDNLEEPEDAKFLNLIHHAAQGPKKKYSETQTEAQEIGWDPNPLINPDRQDHRLNHFRVYHDITLYKAKLWSLGEDDHQK</sequence>
<protein>
    <recommendedName>
        <fullName evidence="6">Cilia- and flagella-associated protein 144</fullName>
    </recommendedName>
    <alternativeName>
        <fullName evidence="5">Testis highly expressed protein 6</fullName>
    </alternativeName>
</protein>
<proteinExistence type="evidence at protein level"/>
<name>CF144_MOUSE</name>
<reference key="1">
    <citation type="submission" date="2008-11" db="EMBL/GenBank/DDBJ databases">
        <title>Cloning of mTHEG-6, a novel gene highly expressed in mouse testis.</title>
        <authorList>
            <person name="Zheng L."/>
            <person name="Zeng F."/>
            <person name="Tong Q."/>
        </authorList>
    </citation>
    <scope>NUCLEOTIDE SEQUENCE [MRNA]</scope>
    <source>
        <strain>BALB/cJ</strain>
        <tissue>Testis</tissue>
    </source>
</reference>
<reference key="2">
    <citation type="journal article" date="2005" name="Science">
        <title>The transcriptional landscape of the mammalian genome.</title>
        <authorList>
            <person name="Carninci P."/>
            <person name="Kasukawa T."/>
            <person name="Katayama S."/>
            <person name="Gough J."/>
            <person name="Frith M.C."/>
            <person name="Maeda N."/>
            <person name="Oyama R."/>
            <person name="Ravasi T."/>
            <person name="Lenhard B."/>
            <person name="Wells C."/>
            <person name="Kodzius R."/>
            <person name="Shimokawa K."/>
            <person name="Bajic V.B."/>
            <person name="Brenner S.E."/>
            <person name="Batalov S."/>
            <person name="Forrest A.R."/>
            <person name="Zavolan M."/>
            <person name="Davis M.J."/>
            <person name="Wilming L.G."/>
            <person name="Aidinis V."/>
            <person name="Allen J.E."/>
            <person name="Ambesi-Impiombato A."/>
            <person name="Apweiler R."/>
            <person name="Aturaliya R.N."/>
            <person name="Bailey T.L."/>
            <person name="Bansal M."/>
            <person name="Baxter L."/>
            <person name="Beisel K.W."/>
            <person name="Bersano T."/>
            <person name="Bono H."/>
            <person name="Chalk A.M."/>
            <person name="Chiu K.P."/>
            <person name="Choudhary V."/>
            <person name="Christoffels A."/>
            <person name="Clutterbuck D.R."/>
            <person name="Crowe M.L."/>
            <person name="Dalla E."/>
            <person name="Dalrymple B.P."/>
            <person name="de Bono B."/>
            <person name="Della Gatta G."/>
            <person name="di Bernardo D."/>
            <person name="Down T."/>
            <person name="Engstrom P."/>
            <person name="Fagiolini M."/>
            <person name="Faulkner G."/>
            <person name="Fletcher C.F."/>
            <person name="Fukushima T."/>
            <person name="Furuno M."/>
            <person name="Futaki S."/>
            <person name="Gariboldi M."/>
            <person name="Georgii-Hemming P."/>
            <person name="Gingeras T.R."/>
            <person name="Gojobori T."/>
            <person name="Green R.E."/>
            <person name="Gustincich S."/>
            <person name="Harbers M."/>
            <person name="Hayashi Y."/>
            <person name="Hensch T.K."/>
            <person name="Hirokawa N."/>
            <person name="Hill D."/>
            <person name="Huminiecki L."/>
            <person name="Iacono M."/>
            <person name="Ikeo K."/>
            <person name="Iwama A."/>
            <person name="Ishikawa T."/>
            <person name="Jakt M."/>
            <person name="Kanapin A."/>
            <person name="Katoh M."/>
            <person name="Kawasawa Y."/>
            <person name="Kelso J."/>
            <person name="Kitamura H."/>
            <person name="Kitano H."/>
            <person name="Kollias G."/>
            <person name="Krishnan S.P."/>
            <person name="Kruger A."/>
            <person name="Kummerfeld S.K."/>
            <person name="Kurochkin I.V."/>
            <person name="Lareau L.F."/>
            <person name="Lazarevic D."/>
            <person name="Lipovich L."/>
            <person name="Liu J."/>
            <person name="Liuni S."/>
            <person name="McWilliam S."/>
            <person name="Madan Babu M."/>
            <person name="Madera M."/>
            <person name="Marchionni L."/>
            <person name="Matsuda H."/>
            <person name="Matsuzawa S."/>
            <person name="Miki H."/>
            <person name="Mignone F."/>
            <person name="Miyake S."/>
            <person name="Morris K."/>
            <person name="Mottagui-Tabar S."/>
            <person name="Mulder N."/>
            <person name="Nakano N."/>
            <person name="Nakauchi H."/>
            <person name="Ng P."/>
            <person name="Nilsson R."/>
            <person name="Nishiguchi S."/>
            <person name="Nishikawa S."/>
            <person name="Nori F."/>
            <person name="Ohara O."/>
            <person name="Okazaki Y."/>
            <person name="Orlando V."/>
            <person name="Pang K.C."/>
            <person name="Pavan W.J."/>
            <person name="Pavesi G."/>
            <person name="Pesole G."/>
            <person name="Petrovsky N."/>
            <person name="Piazza S."/>
            <person name="Reed J."/>
            <person name="Reid J.F."/>
            <person name="Ring B.Z."/>
            <person name="Ringwald M."/>
            <person name="Rost B."/>
            <person name="Ruan Y."/>
            <person name="Salzberg S.L."/>
            <person name="Sandelin A."/>
            <person name="Schneider C."/>
            <person name="Schoenbach C."/>
            <person name="Sekiguchi K."/>
            <person name="Semple C.A."/>
            <person name="Seno S."/>
            <person name="Sessa L."/>
            <person name="Sheng Y."/>
            <person name="Shibata Y."/>
            <person name="Shimada H."/>
            <person name="Shimada K."/>
            <person name="Silva D."/>
            <person name="Sinclair B."/>
            <person name="Sperling S."/>
            <person name="Stupka E."/>
            <person name="Sugiura K."/>
            <person name="Sultana R."/>
            <person name="Takenaka Y."/>
            <person name="Taki K."/>
            <person name="Tammoja K."/>
            <person name="Tan S.L."/>
            <person name="Tang S."/>
            <person name="Taylor M.S."/>
            <person name="Tegner J."/>
            <person name="Teichmann S.A."/>
            <person name="Ueda H.R."/>
            <person name="van Nimwegen E."/>
            <person name="Verardo R."/>
            <person name="Wei C.L."/>
            <person name="Yagi K."/>
            <person name="Yamanishi H."/>
            <person name="Zabarovsky E."/>
            <person name="Zhu S."/>
            <person name="Zimmer A."/>
            <person name="Hide W."/>
            <person name="Bult C."/>
            <person name="Grimmond S.M."/>
            <person name="Teasdale R.D."/>
            <person name="Liu E.T."/>
            <person name="Brusic V."/>
            <person name="Quackenbush J."/>
            <person name="Wahlestedt C."/>
            <person name="Mattick J.S."/>
            <person name="Hume D.A."/>
            <person name="Kai C."/>
            <person name="Sasaki D."/>
            <person name="Tomaru Y."/>
            <person name="Fukuda S."/>
            <person name="Kanamori-Katayama M."/>
            <person name="Suzuki M."/>
            <person name="Aoki J."/>
            <person name="Arakawa T."/>
            <person name="Iida J."/>
            <person name="Imamura K."/>
            <person name="Itoh M."/>
            <person name="Kato T."/>
            <person name="Kawaji H."/>
            <person name="Kawagashira N."/>
            <person name="Kawashima T."/>
            <person name="Kojima M."/>
            <person name="Kondo S."/>
            <person name="Konno H."/>
            <person name="Nakano K."/>
            <person name="Ninomiya N."/>
            <person name="Nishio T."/>
            <person name="Okada M."/>
            <person name="Plessy C."/>
            <person name="Shibata K."/>
            <person name="Shiraki T."/>
            <person name="Suzuki S."/>
            <person name="Tagami M."/>
            <person name="Waki K."/>
            <person name="Watahiki A."/>
            <person name="Okamura-Oho Y."/>
            <person name="Suzuki H."/>
            <person name="Kawai J."/>
            <person name="Hayashizaki Y."/>
        </authorList>
    </citation>
    <scope>NUCLEOTIDE SEQUENCE [LARGE SCALE MRNA] (ISOFORMS 1 AND 2)</scope>
    <source>
        <strain>C57BL/6J</strain>
        <tissue>Head</tissue>
        <tissue>Inner ear</tissue>
    </source>
</reference>
<reference key="3">
    <citation type="journal article" date="2009" name="PLoS Biol.">
        <title>Lineage-specific biology revealed by a finished genome assembly of the mouse.</title>
        <authorList>
            <person name="Church D.M."/>
            <person name="Goodstadt L."/>
            <person name="Hillier L.W."/>
            <person name="Zody M.C."/>
            <person name="Goldstein S."/>
            <person name="She X."/>
            <person name="Bult C.J."/>
            <person name="Agarwala R."/>
            <person name="Cherry J.L."/>
            <person name="DiCuccio M."/>
            <person name="Hlavina W."/>
            <person name="Kapustin Y."/>
            <person name="Meric P."/>
            <person name="Maglott D."/>
            <person name="Birtle Z."/>
            <person name="Marques A.C."/>
            <person name="Graves T."/>
            <person name="Zhou S."/>
            <person name="Teague B."/>
            <person name="Potamousis K."/>
            <person name="Churas C."/>
            <person name="Place M."/>
            <person name="Herschleb J."/>
            <person name="Runnheim R."/>
            <person name="Forrest D."/>
            <person name="Amos-Landgraf J."/>
            <person name="Schwartz D.C."/>
            <person name="Cheng Z."/>
            <person name="Lindblad-Toh K."/>
            <person name="Eichler E.E."/>
            <person name="Ponting C.P."/>
        </authorList>
    </citation>
    <scope>NUCLEOTIDE SEQUENCE [LARGE SCALE GENOMIC DNA]</scope>
    <source>
        <strain>C57BL/6J</strain>
    </source>
</reference>
<reference key="4">
    <citation type="journal article" date="2004" name="Genome Res.">
        <title>The status, quality, and expansion of the NIH full-length cDNA project: the Mammalian Gene Collection (MGC).</title>
        <authorList>
            <consortium name="The MGC Project Team"/>
        </authorList>
    </citation>
    <scope>NUCLEOTIDE SEQUENCE [LARGE SCALE MRNA] (ISOFORM 1)</scope>
</reference>
<reference key="5">
    <citation type="journal article" date="2017" name="Dev. Biol.">
        <title>Identification of FOXJ1 effectors during ciliogenesis in the foetal respiratory epithelium and embryonic left-right organiser of the mouse.</title>
        <authorList>
            <person name="Stauber M."/>
            <person name="Weidemann M."/>
            <person name="Dittrich-Breiholz O."/>
            <person name="Lobschat K."/>
            <person name="Alten L."/>
            <person name="Mai M."/>
            <person name="Beckers A."/>
            <person name="Kracht M."/>
            <person name="Gossler A."/>
        </authorList>
    </citation>
    <scope>SUBCELLULAR LOCATION</scope>
    <scope>TISSUE SPECIFICITY</scope>
    <scope>DEVELOPMENTAL STAGE</scope>
    <scope>INDUCTION</scope>
</reference>
<reference evidence="8" key="6">
    <citation type="journal article" date="2023" name="Cell">
        <title>Structures of sperm flagellar doublet microtubules expand the genetic spectrum of male infertility.</title>
        <authorList>
            <person name="Zhou L."/>
            <person name="Liu H."/>
            <person name="Liu S."/>
            <person name="Yang X."/>
            <person name="Dong Y."/>
            <person name="Pan Y."/>
            <person name="Xiao Z."/>
            <person name="Zheng B."/>
            <person name="Sun Y."/>
            <person name="Huang P."/>
            <person name="Zhang X."/>
            <person name="Hu J."/>
            <person name="Sun R."/>
            <person name="Feng S."/>
            <person name="Zhu Y."/>
            <person name="Liu M."/>
            <person name="Gui M."/>
            <person name="Wu J."/>
        </authorList>
    </citation>
    <scope>STRUCTURE BY ELECTRON MICROSCOPY (3.50 ANGSTROMS) OF SPERM FLAGELLAR DOUBLET MICROTUBULES</scope>
    <scope>SUBCELLULAR LOCATION</scope>
    <scope>SUBUNIT</scope>
</reference>
<organism>
    <name type="scientific">Mus musculus</name>
    <name type="common">Mouse</name>
    <dbReference type="NCBI Taxonomy" id="10090"/>
    <lineage>
        <taxon>Eukaryota</taxon>
        <taxon>Metazoa</taxon>
        <taxon>Chordata</taxon>
        <taxon>Craniata</taxon>
        <taxon>Vertebrata</taxon>
        <taxon>Euteleostomi</taxon>
        <taxon>Mammalia</taxon>
        <taxon>Eutheria</taxon>
        <taxon>Euarchontoglires</taxon>
        <taxon>Glires</taxon>
        <taxon>Rodentia</taxon>
        <taxon>Myomorpha</taxon>
        <taxon>Muroidea</taxon>
        <taxon>Muridae</taxon>
        <taxon>Murinae</taxon>
        <taxon>Mus</taxon>
        <taxon>Mus</taxon>
    </lineage>
</organism>
<dbReference type="EMBL" id="FJ468008">
    <property type="protein sequence ID" value="ACS94741.1"/>
    <property type="status" value="ALT_INIT"/>
    <property type="molecule type" value="mRNA"/>
</dbReference>
<dbReference type="EMBL" id="AK013920">
    <property type="protein sequence ID" value="BAB29057.1"/>
    <property type="status" value="ALT_INIT"/>
    <property type="molecule type" value="mRNA"/>
</dbReference>
<dbReference type="EMBL" id="AK157972">
    <property type="protein sequence ID" value="BAE34292.1"/>
    <property type="status" value="ALT_INIT"/>
    <property type="molecule type" value="mRNA"/>
</dbReference>
<dbReference type="EMBL" id="AL662903">
    <property type="protein sequence ID" value="CAI25624.1"/>
    <property type="status" value="ALT_INIT"/>
    <property type="molecule type" value="Genomic_DNA"/>
</dbReference>
<dbReference type="EMBL" id="AL662903">
    <property type="protein sequence ID" value="CAI25625.1"/>
    <property type="status" value="ALT_INIT"/>
    <property type="molecule type" value="Genomic_DNA"/>
</dbReference>
<dbReference type="EMBL" id="BC117741">
    <property type="status" value="NOT_ANNOTATED_CDS"/>
    <property type="molecule type" value="mRNA"/>
</dbReference>
<dbReference type="EMBL" id="BC126964">
    <property type="status" value="NOT_ANNOTATED_CDS"/>
    <property type="molecule type" value="mRNA"/>
</dbReference>
<dbReference type="CCDS" id="CCDS48807.2">
    <molecule id="Q5NC57-2"/>
</dbReference>
<dbReference type="CCDS" id="CCDS48808.2">
    <molecule id="Q5NC57-1"/>
</dbReference>
<dbReference type="RefSeq" id="NP_001156350.2">
    <molecule id="Q5NC57-2"/>
    <property type="nucleotide sequence ID" value="NM_001162878.3"/>
</dbReference>
<dbReference type="RefSeq" id="NP_083559.2">
    <molecule id="Q5NC57-1"/>
    <property type="nucleotide sequence ID" value="NM_029283.3"/>
</dbReference>
<dbReference type="RefSeq" id="XP_006534449.1">
    <property type="nucleotide sequence ID" value="XM_006534386.3"/>
</dbReference>
<dbReference type="PDB" id="8IYJ">
    <property type="method" value="EM"/>
    <property type="resolution" value="3.50 A"/>
    <property type="chains" value="K1/K2=1-135"/>
</dbReference>
<dbReference type="PDBsum" id="8IYJ"/>
<dbReference type="EMDB" id="EMD-35823"/>
<dbReference type="SMR" id="Q5NC57"/>
<dbReference type="FunCoup" id="Q5NC57">
    <property type="interactions" value="76"/>
</dbReference>
<dbReference type="STRING" id="10090.ENSMUSP00000159142"/>
<dbReference type="PhosphoSitePlus" id="Q5NC57"/>
<dbReference type="PaxDb" id="10090-ENSMUSP00000091708"/>
<dbReference type="ProteomicsDB" id="267686">
    <molecule id="Q5NC57-1"/>
</dbReference>
<dbReference type="ProteomicsDB" id="267687">
    <molecule id="Q5NC57-2"/>
</dbReference>
<dbReference type="ProteomicsDB" id="334534"/>
<dbReference type="Antibodypedia" id="77971">
    <property type="antibodies" value="7 antibodies from 4 providers"/>
</dbReference>
<dbReference type="Ensembl" id="ENSMUST00000060581.5">
    <molecule id="Q5NC57-2"/>
    <property type="protein sequence ID" value="ENSMUSP00000051960.5"/>
    <property type="gene ID" value="ENSMUSG00000049154.13"/>
</dbReference>
<dbReference type="Ensembl" id="ENSMUST00000094156.12">
    <molecule id="Q5NC57-1"/>
    <property type="protein sequence ID" value="ENSMUSP00000091708.6"/>
    <property type="gene ID" value="ENSMUSG00000049154.13"/>
</dbReference>
<dbReference type="GeneID" id="75429"/>
<dbReference type="KEGG" id="mmu:75429"/>
<dbReference type="UCSC" id="uc007jci.2">
    <property type="organism name" value="mouse"/>
</dbReference>
<dbReference type="UCSC" id="uc011xvi.1">
    <molecule id="Q5NC57-2"/>
    <property type="organism name" value="mouse"/>
</dbReference>
<dbReference type="AGR" id="MGI:1922679"/>
<dbReference type="CTD" id="440585"/>
<dbReference type="MGI" id="MGI:1922679">
    <property type="gene designation" value="Cfap144"/>
</dbReference>
<dbReference type="VEuPathDB" id="HostDB:ENSMUSG00000049154"/>
<dbReference type="eggNOG" id="ENOG502RZSS">
    <property type="taxonomic scope" value="Eukaryota"/>
</dbReference>
<dbReference type="GeneTree" id="ENSGT00390000006224"/>
<dbReference type="HOGENOM" id="CLU_155974_0_0_1"/>
<dbReference type="InParanoid" id="Q5NC57"/>
<dbReference type="OMA" id="SQEIGWM"/>
<dbReference type="OrthoDB" id="446290at2759"/>
<dbReference type="TreeFam" id="TF329423"/>
<dbReference type="BioGRID-ORCS" id="75429">
    <property type="hits" value="2 hits in 76 CRISPR screens"/>
</dbReference>
<dbReference type="ChiTaRS" id="Fam183b">
    <property type="organism name" value="mouse"/>
</dbReference>
<dbReference type="PRO" id="PR:Q5NC57"/>
<dbReference type="Proteomes" id="UP000000589">
    <property type="component" value="Chromosome 11"/>
</dbReference>
<dbReference type="RNAct" id="Q5NC57">
    <property type="molecule type" value="protein"/>
</dbReference>
<dbReference type="Bgee" id="ENSMUSG00000049154">
    <property type="expression patterns" value="Expressed in spermatid and 89 other cell types or tissues"/>
</dbReference>
<dbReference type="ExpressionAtlas" id="Q5NC57">
    <property type="expression patterns" value="baseline and differential"/>
</dbReference>
<dbReference type="GO" id="GO:0160112">
    <property type="term" value="C:axonemal B tubule inner sheath"/>
    <property type="evidence" value="ECO:0000314"/>
    <property type="project" value="MGI"/>
</dbReference>
<dbReference type="GO" id="GO:0005813">
    <property type="term" value="C:centrosome"/>
    <property type="evidence" value="ECO:0000314"/>
    <property type="project" value="MGI"/>
</dbReference>
<dbReference type="GO" id="GO:0036064">
    <property type="term" value="C:ciliary basal body"/>
    <property type="evidence" value="ECO:0000314"/>
    <property type="project" value="UniProtKB"/>
</dbReference>
<dbReference type="GO" id="GO:0097546">
    <property type="term" value="C:ciliary base"/>
    <property type="evidence" value="ECO:0000314"/>
    <property type="project" value="MGI"/>
</dbReference>
<dbReference type="GO" id="GO:0036126">
    <property type="term" value="C:sperm flagellum"/>
    <property type="evidence" value="ECO:0000314"/>
    <property type="project" value="UniProtKB"/>
</dbReference>
<dbReference type="GO" id="GO:0030317">
    <property type="term" value="P:flagellated sperm motility"/>
    <property type="evidence" value="ECO:0000314"/>
    <property type="project" value="UniProtKB"/>
</dbReference>
<dbReference type="InterPro" id="IPR029214">
    <property type="entry name" value="CFAP144"/>
</dbReference>
<dbReference type="PANTHER" id="PTHR33865">
    <property type="entry name" value="PROTEIN FAM183B"/>
    <property type="match status" value="1"/>
</dbReference>
<dbReference type="PANTHER" id="PTHR33865:SF3">
    <property type="entry name" value="PROTEIN FAM183B"/>
    <property type="match status" value="1"/>
</dbReference>
<dbReference type="Pfam" id="PF14886">
    <property type="entry name" value="FAM183"/>
    <property type="match status" value="1"/>
</dbReference>
<evidence type="ECO:0000256" key="1">
    <source>
        <dbReference type="SAM" id="MobiDB-lite"/>
    </source>
</evidence>
<evidence type="ECO:0000269" key="2">
    <source>
    </source>
</evidence>
<evidence type="ECO:0000269" key="3">
    <source>
    </source>
</evidence>
<evidence type="ECO:0000303" key="4">
    <source>
    </source>
</evidence>
<evidence type="ECO:0000303" key="5">
    <source ref="1"/>
</evidence>
<evidence type="ECO:0000305" key="6"/>
<evidence type="ECO:0000312" key="7">
    <source>
        <dbReference type="MGI" id="MGI:1922679"/>
    </source>
</evidence>
<evidence type="ECO:0007744" key="8">
    <source>
        <dbReference type="PDB" id="8IYJ"/>
    </source>
</evidence>
<accession>Q5NC57</accession>
<accession>D2D553</accession>
<accession>Q3TZB7</accession>
<accession>Q9CXW5</accession>